<accession>O94526</accession>
<keyword id="KW-0968">Cytoplasmic vesicle</keyword>
<keyword id="KW-0378">Hydrolase</keyword>
<keyword id="KW-0904">Protein phosphatase</keyword>
<keyword id="KW-1185">Reference proteome</keyword>
<feature type="chain" id="PRO_0000353823" description="Phosphatidylinositol 3,4,5-trisphosphate 3-phosphatase ptn1">
    <location>
        <begin position="1"/>
        <end position="348"/>
    </location>
</feature>
<feature type="domain" description="Phosphatase tensin-type" evidence="2">
    <location>
        <begin position="18"/>
        <end position="189"/>
    </location>
</feature>
<feature type="active site" description="Phosphocysteine intermediate" evidence="2">
    <location>
        <position position="129"/>
    </location>
</feature>
<protein>
    <recommendedName>
        <fullName>Phosphatidylinositol 3,4,5-trisphosphate 3-phosphatase ptn1</fullName>
        <ecNumber evidence="3">3.1.3.67</ecNumber>
    </recommendedName>
</protein>
<name>PTEN_SCHPO</name>
<gene>
    <name type="primary">ptn1</name>
    <name type="ORF">SPBC609.02</name>
</gene>
<sequence length="348" mass="40157">MNILRSVVSRGRKGLKQEKVNRSFAYLDMVYITSKVIAMSTPAAGIHKLYRNDELDVFKYLTTQLKDNWILLNLCAEETVYHLELFKPNVINYGFQDHNPPPLLFLWAIVMNMDALFQTQPLLTLVVHCKAGKGRTGTVICSYLVAFGGLTAKQSLELYTEKRMVRGHGLTISSQIRYVYYIEILKQFPNYLKAVEFNTGTTFFKSFKCLNIKKNSSLILSLHAFSKGRNINPVALWKSSDISSHNVSIKEGKRIWGIQCNLETSEKDLLLRVERKGQFYFPSSVQCWFHTHFQPMLVEYTNGINFQQGINSFLQGQQSISFSWSEMDNSRRSDPFFEQLTIVYENVF</sequence>
<proteinExistence type="evidence at protein level"/>
<dbReference type="EC" id="3.1.3.67" evidence="3"/>
<dbReference type="EMBL" id="CU329671">
    <property type="protein sequence ID" value="CAA22831.1"/>
    <property type="molecule type" value="Genomic_DNA"/>
</dbReference>
<dbReference type="PIR" id="T40573">
    <property type="entry name" value="T40573"/>
</dbReference>
<dbReference type="RefSeq" id="NP_596312.1">
    <property type="nucleotide sequence ID" value="NM_001022234.2"/>
</dbReference>
<dbReference type="SMR" id="O94526"/>
<dbReference type="BioGRID" id="277616">
    <property type="interactions" value="30"/>
</dbReference>
<dbReference type="FunCoup" id="O94526">
    <property type="interactions" value="436"/>
</dbReference>
<dbReference type="STRING" id="284812.O94526"/>
<dbReference type="PaxDb" id="4896-SPBC609.02.1"/>
<dbReference type="EnsemblFungi" id="SPBC609.02.1">
    <property type="protein sequence ID" value="SPBC609.02.1:pep"/>
    <property type="gene ID" value="SPBC609.02"/>
</dbReference>
<dbReference type="GeneID" id="2541101"/>
<dbReference type="KEGG" id="spo:2541101"/>
<dbReference type="PomBase" id="SPBC609.02">
    <property type="gene designation" value="ptn1"/>
</dbReference>
<dbReference type="VEuPathDB" id="FungiDB:SPBC609.02"/>
<dbReference type="eggNOG" id="KOG2283">
    <property type="taxonomic scope" value="Eukaryota"/>
</dbReference>
<dbReference type="HOGENOM" id="CLU_020105_4_1_1"/>
<dbReference type="InParanoid" id="O94526"/>
<dbReference type="OMA" id="SNYMVIN"/>
<dbReference type="PhylomeDB" id="O94526"/>
<dbReference type="Reactome" id="R-SPO-1660499">
    <property type="pathway name" value="Synthesis of PIPs at the plasma membrane"/>
</dbReference>
<dbReference type="Reactome" id="R-SPO-1660514">
    <property type="pathway name" value="Synthesis of PIPs at the Golgi membrane"/>
</dbReference>
<dbReference type="Reactome" id="R-SPO-1855204">
    <property type="pathway name" value="Synthesis of IP3 and IP4 in the cytosol"/>
</dbReference>
<dbReference type="Reactome" id="R-SPO-199418">
    <property type="pathway name" value="Negative regulation of the PI3K/AKT network"/>
</dbReference>
<dbReference type="Reactome" id="R-SPO-202424">
    <property type="pathway name" value="Downstream TCR signaling"/>
</dbReference>
<dbReference type="Reactome" id="R-SPO-5689880">
    <property type="pathway name" value="Ub-specific processing proteases"/>
</dbReference>
<dbReference type="Reactome" id="R-SPO-8948747">
    <property type="pathway name" value="Regulation of PTEN localization"/>
</dbReference>
<dbReference type="Reactome" id="R-SPO-8948751">
    <property type="pathway name" value="Regulation of PTEN stability and activity"/>
</dbReference>
<dbReference type="PRO" id="PR:O94526"/>
<dbReference type="Proteomes" id="UP000002485">
    <property type="component" value="Chromosome II"/>
</dbReference>
<dbReference type="GO" id="GO:0032153">
    <property type="term" value="C:cell division site"/>
    <property type="evidence" value="ECO:0000314"/>
    <property type="project" value="PomBase"/>
</dbReference>
<dbReference type="GO" id="GO:0005829">
    <property type="term" value="C:cytosol"/>
    <property type="evidence" value="ECO:0000318"/>
    <property type="project" value="GO_Central"/>
</dbReference>
<dbReference type="GO" id="GO:0005770">
    <property type="term" value="C:late endosome"/>
    <property type="evidence" value="ECO:0000314"/>
    <property type="project" value="PomBase"/>
</dbReference>
<dbReference type="GO" id="GO:0016314">
    <property type="term" value="F:phosphatidylinositol-3,4,5-trisphosphate 3-phosphatase activity"/>
    <property type="evidence" value="ECO:0000314"/>
    <property type="project" value="PomBase"/>
</dbReference>
<dbReference type="GO" id="GO:0004721">
    <property type="term" value="F:phosphoprotein phosphatase activity"/>
    <property type="evidence" value="ECO:0007669"/>
    <property type="project" value="UniProtKB-KW"/>
</dbReference>
<dbReference type="GO" id="GO:0046854">
    <property type="term" value="P:phosphatidylinositol phosphate biosynthetic process"/>
    <property type="evidence" value="ECO:0000315"/>
    <property type="project" value="PomBase"/>
</dbReference>
<dbReference type="CDD" id="cd14497">
    <property type="entry name" value="PTP_PTEN-like"/>
    <property type="match status" value="1"/>
</dbReference>
<dbReference type="Gene3D" id="3.90.190.10">
    <property type="entry name" value="Protein tyrosine phosphatase superfamily"/>
    <property type="match status" value="1"/>
</dbReference>
<dbReference type="InterPro" id="IPR051281">
    <property type="entry name" value="Dual-spec_lipid-protein_phosph"/>
</dbReference>
<dbReference type="InterPro" id="IPR029021">
    <property type="entry name" value="Prot-tyrosine_phosphatase-like"/>
</dbReference>
<dbReference type="InterPro" id="IPR057023">
    <property type="entry name" value="PTP-SAK"/>
</dbReference>
<dbReference type="InterPro" id="IPR029023">
    <property type="entry name" value="Tensin_phosphatase"/>
</dbReference>
<dbReference type="InterPro" id="IPR016130">
    <property type="entry name" value="Tyr_Pase_AS"/>
</dbReference>
<dbReference type="InterPro" id="IPR000387">
    <property type="entry name" value="Tyr_Pase_dom"/>
</dbReference>
<dbReference type="PANTHER" id="PTHR12305">
    <property type="entry name" value="PHOSPHATASE WITH HOMOLOGY TO TENSIN"/>
    <property type="match status" value="1"/>
</dbReference>
<dbReference type="PANTHER" id="PTHR12305:SF60">
    <property type="entry name" value="PHOSPHATIDYLINOSITOL 3,4,5-TRISPHOSPHATE 3-PHOSPHATASE TPTE2-RELATED"/>
    <property type="match status" value="1"/>
</dbReference>
<dbReference type="Pfam" id="PF22784">
    <property type="entry name" value="PTP-SAK"/>
    <property type="match status" value="1"/>
</dbReference>
<dbReference type="SUPFAM" id="SSF52799">
    <property type="entry name" value="(Phosphotyrosine protein) phosphatases II"/>
    <property type="match status" value="1"/>
</dbReference>
<dbReference type="PROSITE" id="PS51181">
    <property type="entry name" value="PPASE_TENSIN"/>
    <property type="match status" value="1"/>
</dbReference>
<dbReference type="PROSITE" id="PS50056">
    <property type="entry name" value="TYR_PHOSPHATASE_2"/>
    <property type="match status" value="1"/>
</dbReference>
<evidence type="ECO:0000250" key="1">
    <source>
        <dbReference type="UniProtKB" id="P60484"/>
    </source>
</evidence>
<evidence type="ECO:0000255" key="2">
    <source>
        <dbReference type="PROSITE-ProRule" id="PRU00590"/>
    </source>
</evidence>
<evidence type="ECO:0000269" key="3">
    <source>
    </source>
</evidence>
<comment type="function">
    <text evidence="3">Acts as a phosphoinositide 3-phosphatase and regulates PtdIns(3,4,5)P3 levels.</text>
</comment>
<comment type="catalytic activity">
    <reaction evidence="3">
        <text>a 1,2-diacyl-sn-glycero-3-phospho-(1D-myo-inositol-3,4,5-trisphosphate) + H2O = a 1,2-diacyl-sn-glycero-3-phospho-(1D-myo-inositol-4,5-bisphosphate) + phosphate</text>
        <dbReference type="Rhea" id="RHEA:25017"/>
        <dbReference type="ChEBI" id="CHEBI:15377"/>
        <dbReference type="ChEBI" id="CHEBI:43474"/>
        <dbReference type="ChEBI" id="CHEBI:57836"/>
        <dbReference type="ChEBI" id="CHEBI:58456"/>
        <dbReference type="EC" id="3.1.3.67"/>
    </reaction>
</comment>
<comment type="catalytic activity">
    <reaction evidence="1">
        <text>1,2-dioctanoyl-sn-glycero-3-phospho-(1D-myo-inositol-3,4,5-trisphosphate) + H2O = 1,2-dioctanoyl-sn-glycero-3-phospho-(1D-myo-inositol-4,5-bisphosphate) + phosphate</text>
        <dbReference type="Rhea" id="RHEA:43552"/>
        <dbReference type="ChEBI" id="CHEBI:15377"/>
        <dbReference type="ChEBI" id="CHEBI:43474"/>
        <dbReference type="ChEBI" id="CHEBI:83416"/>
        <dbReference type="ChEBI" id="CHEBI:83419"/>
    </reaction>
</comment>
<comment type="catalytic activity">
    <reaction evidence="1">
        <text>1,2-dihexadecanoyl-sn-glycero-3-phospho-(1D-myo-inositol-3,4,5-trisphosphate) + H2O = 1,2-dihexadecanoyl-sn-glycero-3-phospho-(1D-myo-inositol-4,5-bisphosphate) + phosphate</text>
        <dbReference type="Rhea" id="RHEA:43560"/>
        <dbReference type="ChEBI" id="CHEBI:15377"/>
        <dbReference type="ChEBI" id="CHEBI:43474"/>
        <dbReference type="ChEBI" id="CHEBI:83420"/>
        <dbReference type="ChEBI" id="CHEBI:83423"/>
    </reaction>
</comment>
<comment type="subcellular location">
    <subcellularLocation>
        <location evidence="3">Cytoplasmic vesicle</location>
    </subcellularLocation>
</comment>
<organism>
    <name type="scientific">Schizosaccharomyces pombe (strain 972 / ATCC 24843)</name>
    <name type="common">Fission yeast</name>
    <dbReference type="NCBI Taxonomy" id="284812"/>
    <lineage>
        <taxon>Eukaryota</taxon>
        <taxon>Fungi</taxon>
        <taxon>Dikarya</taxon>
        <taxon>Ascomycota</taxon>
        <taxon>Taphrinomycotina</taxon>
        <taxon>Schizosaccharomycetes</taxon>
        <taxon>Schizosaccharomycetales</taxon>
        <taxon>Schizosaccharomycetaceae</taxon>
        <taxon>Schizosaccharomyces</taxon>
    </lineage>
</organism>
<reference key="1">
    <citation type="journal article" date="2002" name="Nature">
        <title>The genome sequence of Schizosaccharomyces pombe.</title>
        <authorList>
            <person name="Wood V."/>
            <person name="Gwilliam R."/>
            <person name="Rajandream M.A."/>
            <person name="Lyne M.H."/>
            <person name="Lyne R."/>
            <person name="Stewart A."/>
            <person name="Sgouros J.G."/>
            <person name="Peat N."/>
            <person name="Hayles J."/>
            <person name="Baker S.G."/>
            <person name="Basham D."/>
            <person name="Bowman S."/>
            <person name="Brooks K."/>
            <person name="Brown D."/>
            <person name="Brown S."/>
            <person name="Chillingworth T."/>
            <person name="Churcher C.M."/>
            <person name="Collins M."/>
            <person name="Connor R."/>
            <person name="Cronin A."/>
            <person name="Davis P."/>
            <person name="Feltwell T."/>
            <person name="Fraser A."/>
            <person name="Gentles S."/>
            <person name="Goble A."/>
            <person name="Hamlin N."/>
            <person name="Harris D.E."/>
            <person name="Hidalgo J."/>
            <person name="Hodgson G."/>
            <person name="Holroyd S."/>
            <person name="Hornsby T."/>
            <person name="Howarth S."/>
            <person name="Huckle E.J."/>
            <person name="Hunt S."/>
            <person name="Jagels K."/>
            <person name="James K.D."/>
            <person name="Jones L."/>
            <person name="Jones M."/>
            <person name="Leather S."/>
            <person name="McDonald S."/>
            <person name="McLean J."/>
            <person name="Mooney P."/>
            <person name="Moule S."/>
            <person name="Mungall K.L."/>
            <person name="Murphy L.D."/>
            <person name="Niblett D."/>
            <person name="Odell C."/>
            <person name="Oliver K."/>
            <person name="O'Neil S."/>
            <person name="Pearson D."/>
            <person name="Quail M.A."/>
            <person name="Rabbinowitsch E."/>
            <person name="Rutherford K.M."/>
            <person name="Rutter S."/>
            <person name="Saunders D."/>
            <person name="Seeger K."/>
            <person name="Sharp S."/>
            <person name="Skelton J."/>
            <person name="Simmonds M.N."/>
            <person name="Squares R."/>
            <person name="Squares S."/>
            <person name="Stevens K."/>
            <person name="Taylor K."/>
            <person name="Taylor R.G."/>
            <person name="Tivey A."/>
            <person name="Walsh S.V."/>
            <person name="Warren T."/>
            <person name="Whitehead S."/>
            <person name="Woodward J.R."/>
            <person name="Volckaert G."/>
            <person name="Aert R."/>
            <person name="Robben J."/>
            <person name="Grymonprez B."/>
            <person name="Weltjens I."/>
            <person name="Vanstreels E."/>
            <person name="Rieger M."/>
            <person name="Schaefer M."/>
            <person name="Mueller-Auer S."/>
            <person name="Gabel C."/>
            <person name="Fuchs M."/>
            <person name="Duesterhoeft A."/>
            <person name="Fritzc C."/>
            <person name="Holzer E."/>
            <person name="Moestl D."/>
            <person name="Hilbert H."/>
            <person name="Borzym K."/>
            <person name="Langer I."/>
            <person name="Beck A."/>
            <person name="Lehrach H."/>
            <person name="Reinhardt R."/>
            <person name="Pohl T.M."/>
            <person name="Eger P."/>
            <person name="Zimmermann W."/>
            <person name="Wedler H."/>
            <person name="Wambutt R."/>
            <person name="Purnelle B."/>
            <person name="Goffeau A."/>
            <person name="Cadieu E."/>
            <person name="Dreano S."/>
            <person name="Gloux S."/>
            <person name="Lelaure V."/>
            <person name="Mottier S."/>
            <person name="Galibert F."/>
            <person name="Aves S.J."/>
            <person name="Xiang Z."/>
            <person name="Hunt C."/>
            <person name="Moore K."/>
            <person name="Hurst S.M."/>
            <person name="Lucas M."/>
            <person name="Rochet M."/>
            <person name="Gaillardin C."/>
            <person name="Tallada V.A."/>
            <person name="Garzon A."/>
            <person name="Thode G."/>
            <person name="Daga R.R."/>
            <person name="Cruzado L."/>
            <person name="Jimenez J."/>
            <person name="Sanchez M."/>
            <person name="del Rey F."/>
            <person name="Benito J."/>
            <person name="Dominguez A."/>
            <person name="Revuelta J.L."/>
            <person name="Moreno S."/>
            <person name="Armstrong J."/>
            <person name="Forsburg S.L."/>
            <person name="Cerutti L."/>
            <person name="Lowe T."/>
            <person name="McCombie W.R."/>
            <person name="Paulsen I."/>
            <person name="Potashkin J."/>
            <person name="Shpakovski G.V."/>
            <person name="Ussery D."/>
            <person name="Barrell B.G."/>
            <person name="Nurse P."/>
        </authorList>
    </citation>
    <scope>NUCLEOTIDE SEQUENCE [LARGE SCALE GENOMIC DNA]</scope>
    <source>
        <strain>972 / ATCC 24843</strain>
    </source>
</reference>
<reference key="2">
    <citation type="journal article" date="2004" name="J. Cell Biol.">
        <title>A novel phosphatidylinositol(3,4,5)P3 pathway in fission yeast.</title>
        <authorList>
            <person name="Mitra P."/>
            <person name="Zhang Y."/>
            <person name="Rameh L.E."/>
            <person name="Ivshina M.P."/>
            <person name="McCollum D."/>
            <person name="Nunnari J.J."/>
            <person name="Hendricks G.M."/>
            <person name="Kerr M.L."/>
            <person name="Field S.J."/>
            <person name="Cantley L.C."/>
            <person name="Ross A.H."/>
        </authorList>
    </citation>
    <scope>FUNCTION</scope>
    <scope>SUBCELLULAR LOCATION</scope>
    <scope>CATALYTIC ACTIVITY</scope>
</reference>